<dbReference type="EMBL" id="AE016820">
    <property type="protein sequence ID" value="AAS54873.1"/>
    <property type="molecule type" value="Genomic_DNA"/>
</dbReference>
<dbReference type="RefSeq" id="NP_987049.1">
    <property type="nucleotide sequence ID" value="NM_212111.1"/>
</dbReference>
<dbReference type="SMR" id="Q74Z23"/>
<dbReference type="FunCoup" id="Q74Z23">
    <property type="interactions" value="110"/>
</dbReference>
<dbReference type="STRING" id="284811.Q74Z23"/>
<dbReference type="EnsemblFungi" id="AAS54873">
    <property type="protein sequence ID" value="AAS54873"/>
    <property type="gene ID" value="AGOS_AGR383W"/>
</dbReference>
<dbReference type="GeneID" id="4623353"/>
<dbReference type="KEGG" id="ago:AGOS_AGR383W"/>
<dbReference type="eggNOG" id="KOG0766">
    <property type="taxonomic scope" value="Eukaryota"/>
</dbReference>
<dbReference type="HOGENOM" id="CLU_015166_0_3_1"/>
<dbReference type="InParanoid" id="Q74Z23"/>
<dbReference type="OMA" id="WGIYEEL"/>
<dbReference type="OrthoDB" id="1924968at2759"/>
<dbReference type="Proteomes" id="UP000000591">
    <property type="component" value="Chromosome VII"/>
</dbReference>
<dbReference type="GO" id="GO:0005743">
    <property type="term" value="C:mitochondrial inner membrane"/>
    <property type="evidence" value="ECO:0007669"/>
    <property type="project" value="UniProtKB-SubCell"/>
</dbReference>
<dbReference type="GO" id="GO:0005739">
    <property type="term" value="C:mitochondrion"/>
    <property type="evidence" value="ECO:0000318"/>
    <property type="project" value="GO_Central"/>
</dbReference>
<dbReference type="GO" id="GO:0015187">
    <property type="term" value="F:glycine transmembrane transporter activity"/>
    <property type="evidence" value="ECO:0000318"/>
    <property type="project" value="GO_Central"/>
</dbReference>
<dbReference type="GO" id="GO:1904983">
    <property type="term" value="P:glycine import into mitochondrion"/>
    <property type="evidence" value="ECO:0000318"/>
    <property type="project" value="GO_Central"/>
</dbReference>
<dbReference type="GO" id="GO:0006783">
    <property type="term" value="P:heme biosynthetic process"/>
    <property type="evidence" value="ECO:0007669"/>
    <property type="project" value="EnsemblFungi"/>
</dbReference>
<dbReference type="FunFam" id="1.50.40.10:FF:000103">
    <property type="entry name" value="Mitochondrial glycine transporter"/>
    <property type="match status" value="1"/>
</dbReference>
<dbReference type="Gene3D" id="1.50.40.10">
    <property type="entry name" value="Mitochondrial carrier domain"/>
    <property type="match status" value="1"/>
</dbReference>
<dbReference type="HAMAP" id="MF_03064">
    <property type="entry name" value="SLC25A38"/>
    <property type="match status" value="1"/>
</dbReference>
<dbReference type="InterPro" id="IPR030847">
    <property type="entry name" value="Hem25/SLC25A38"/>
</dbReference>
<dbReference type="InterPro" id="IPR018108">
    <property type="entry name" value="Mitochondrial_sb/sol_carrier"/>
</dbReference>
<dbReference type="InterPro" id="IPR023395">
    <property type="entry name" value="Mt_carrier_dom_sf"/>
</dbReference>
<dbReference type="PANTHER" id="PTHR46181">
    <property type="entry name" value="MITOCHONDRIAL GLYCINE TRANSPORTER"/>
    <property type="match status" value="1"/>
</dbReference>
<dbReference type="PANTHER" id="PTHR46181:SF3">
    <property type="entry name" value="MITOCHONDRIAL GLYCINE TRANSPORTER"/>
    <property type="match status" value="1"/>
</dbReference>
<dbReference type="Pfam" id="PF00153">
    <property type="entry name" value="Mito_carr"/>
    <property type="match status" value="3"/>
</dbReference>
<dbReference type="SUPFAM" id="SSF103506">
    <property type="entry name" value="Mitochondrial carrier"/>
    <property type="match status" value="1"/>
</dbReference>
<dbReference type="PROSITE" id="PS50920">
    <property type="entry name" value="SOLCAR"/>
    <property type="match status" value="3"/>
</dbReference>
<proteinExistence type="inferred from homology"/>
<keyword id="KW-0472">Membrane</keyword>
<keyword id="KW-0496">Mitochondrion</keyword>
<keyword id="KW-0999">Mitochondrion inner membrane</keyword>
<keyword id="KW-1185">Reference proteome</keyword>
<keyword id="KW-0677">Repeat</keyword>
<keyword id="KW-0812">Transmembrane</keyword>
<keyword id="KW-1133">Transmembrane helix</keyword>
<keyword id="KW-0813">Transport</keyword>
<evidence type="ECO:0000250" key="1">
    <source>
        <dbReference type="UniProtKB" id="Q96DW6"/>
    </source>
</evidence>
<evidence type="ECO:0000255" key="2">
    <source>
        <dbReference type="HAMAP-Rule" id="MF_03064"/>
    </source>
</evidence>
<organism>
    <name type="scientific">Eremothecium gossypii (strain ATCC 10895 / CBS 109.51 / FGSC 9923 / NRRL Y-1056)</name>
    <name type="common">Yeast</name>
    <name type="synonym">Ashbya gossypii</name>
    <dbReference type="NCBI Taxonomy" id="284811"/>
    <lineage>
        <taxon>Eukaryota</taxon>
        <taxon>Fungi</taxon>
        <taxon>Dikarya</taxon>
        <taxon>Ascomycota</taxon>
        <taxon>Saccharomycotina</taxon>
        <taxon>Saccharomycetes</taxon>
        <taxon>Saccharomycetales</taxon>
        <taxon>Saccharomycetaceae</taxon>
        <taxon>Eremothecium</taxon>
    </lineage>
</organism>
<name>S2538_EREGS</name>
<protein>
    <recommendedName>
        <fullName evidence="2">Mitochondrial glycine transporter</fullName>
    </recommendedName>
    <alternativeName>
        <fullName evidence="2">Solute carrier family 25 member 38 homolog</fullName>
    </alternativeName>
</protein>
<gene>
    <name type="ordered locus">AGR383W</name>
    <name type="ORF">AGOS_AGR383W</name>
</gene>
<comment type="function">
    <text evidence="2">Mitochondrial glycine transporter that imports glycine into the mitochondrial matrix. Plays an important role in providing glycine for the first enzymatic step in heme biosynthesis, the condensation of glycine with succinyl-CoA to produce 5-aminolevulinate (ALA) in the mitochondrial matrix.</text>
</comment>
<comment type="catalytic activity">
    <reaction evidence="1">
        <text>glycine(in) = glycine(out)</text>
        <dbReference type="Rhea" id="RHEA:70715"/>
        <dbReference type="ChEBI" id="CHEBI:57305"/>
    </reaction>
</comment>
<comment type="subcellular location">
    <subcellularLocation>
        <location evidence="2">Mitochondrion inner membrane</location>
        <topology evidence="2">Multi-pass membrane protein</topology>
    </subcellularLocation>
</comment>
<comment type="similarity">
    <text evidence="2">Belongs to the mitochondrial carrier (TC 2.A.29) family. SLC25A38 subfamily.</text>
</comment>
<accession>Q74Z23</accession>
<feature type="chain" id="PRO_0000378923" description="Mitochondrial glycine transporter">
    <location>
        <begin position="1"/>
        <end position="293"/>
    </location>
</feature>
<feature type="transmembrane region" description="Helical; Name=1" evidence="2">
    <location>
        <begin position="12"/>
        <end position="37"/>
    </location>
</feature>
<feature type="transmembrane region" description="Helical; Name=2" evidence="2">
    <location>
        <begin position="60"/>
        <end position="86"/>
    </location>
</feature>
<feature type="transmembrane region" description="Helical; Name=3" evidence="2">
    <location>
        <begin position="108"/>
        <end position="133"/>
    </location>
</feature>
<feature type="transmembrane region" description="Helical; Name=4" evidence="2">
    <location>
        <begin position="161"/>
        <end position="184"/>
    </location>
</feature>
<feature type="transmembrane region" description="Helical; Name=5" evidence="2">
    <location>
        <begin position="212"/>
        <end position="238"/>
    </location>
</feature>
<feature type="transmembrane region" description="Helical; Name=6" evidence="2">
    <location>
        <begin position="266"/>
        <end position="284"/>
    </location>
</feature>
<feature type="repeat" description="Solcar 1" evidence="2">
    <location>
        <begin position="6"/>
        <end position="85"/>
    </location>
</feature>
<feature type="repeat" description="Solcar 2" evidence="2">
    <location>
        <begin position="102"/>
        <end position="186"/>
    </location>
</feature>
<feature type="repeat" description="Solcar 3" evidence="2">
    <location>
        <begin position="208"/>
        <end position="291"/>
    </location>
</feature>
<reference key="1">
    <citation type="journal article" date="2004" name="Science">
        <title>The Ashbya gossypii genome as a tool for mapping the ancient Saccharomyces cerevisiae genome.</title>
        <authorList>
            <person name="Dietrich F.S."/>
            <person name="Voegeli S."/>
            <person name="Brachat S."/>
            <person name="Lerch A."/>
            <person name="Gates K."/>
            <person name="Steiner S."/>
            <person name="Mohr C."/>
            <person name="Poehlmann R."/>
            <person name="Luedi P."/>
            <person name="Choi S."/>
            <person name="Wing R.A."/>
            <person name="Flavier A."/>
            <person name="Gaffney T.D."/>
            <person name="Philippsen P."/>
        </authorList>
    </citation>
    <scope>NUCLEOTIDE SEQUENCE [LARGE SCALE GENOMIC DNA]</scope>
    <source>
        <strain>ATCC 10895 / CBS 109.51 / FGSC 9923 / NRRL Y-1056</strain>
    </source>
</reference>
<reference key="2">
    <citation type="journal article" date="2013" name="G3 (Bethesda)">
        <title>Genomes of Ashbya fungi isolated from insects reveal four mating-type loci, numerous translocations, lack of transposons, and distinct gene duplications.</title>
        <authorList>
            <person name="Dietrich F.S."/>
            <person name="Voegeli S."/>
            <person name="Kuo S."/>
            <person name="Philippsen P."/>
        </authorList>
    </citation>
    <scope>GENOME REANNOTATION</scope>
    <source>
        <strain>ATCC 10895 / CBS 109.51 / FGSC 9923 / NRRL Y-1056</strain>
    </source>
</reference>
<sequence length="293" mass="31817">MSEKAGGVPAHLVSGFFGGLASVCALQPLDLLKTRLQQAQASSLRSVLREVRTTRELWRGTLPSALRTSIGSALYLSLLNYSRSALARGSEARTRSSLLPRLQSYQNLLTGALSRAAVGLVTMPITVIKVRYESTLYAYNGLAEATRHIWRSEGARGFFKGAAATTLRDAPYAGLYVLLYEQAKEMLPRALPATLLGADESGKLTAPASAMVNGVSAFLSASLATTLTAPFDTIKTRMQLQSHPVGFVQTLRHIVCEERARTLFDGLSLRLCRKAMSACIAWGIYEELLKLLH</sequence>